<protein>
    <recommendedName>
        <fullName>Plasma membrane proteolipid 3</fullName>
    </recommendedName>
</protein>
<accession>Q871V2</accession>
<sequence length="57" mass="6225">MAFTASDICKIIVAVILPPLGVFFERGCGADLFINILLTILGYLPGIVHALYIILKY</sequence>
<dbReference type="EMBL" id="BX294019">
    <property type="protein sequence ID" value="CAD70889.1"/>
    <property type="molecule type" value="Genomic_DNA"/>
</dbReference>
<dbReference type="EMBL" id="CM002240">
    <property type="protein sequence ID" value="EAA31469.2"/>
    <property type="status" value="ALT_SEQ"/>
    <property type="molecule type" value="Genomic_DNA"/>
</dbReference>
<dbReference type="RefSeq" id="XP_960705.2">
    <property type="nucleotide sequence ID" value="XM_955612.3"/>
</dbReference>
<dbReference type="FunCoup" id="Q871V2">
    <property type="interactions" value="1146"/>
</dbReference>
<dbReference type="STRING" id="367110.Q871V2"/>
<dbReference type="PaxDb" id="5141-EFNCRP00000006651"/>
<dbReference type="EnsemblFungi" id="EAA31469">
    <property type="protein sequence ID" value="EAA31469"/>
    <property type="gene ID" value="NCU06660"/>
</dbReference>
<dbReference type="GeneID" id="3876843"/>
<dbReference type="KEGG" id="ncr:NCU06660"/>
<dbReference type="HOGENOM" id="CLU_107649_6_2_1"/>
<dbReference type="InParanoid" id="Q871V2"/>
<dbReference type="OMA" id="VHAIWVI"/>
<dbReference type="OrthoDB" id="2802411at2759"/>
<dbReference type="Proteomes" id="UP000001805">
    <property type="component" value="Chromosome 2, Linkage Group V"/>
</dbReference>
<dbReference type="GO" id="GO:0005886">
    <property type="term" value="C:plasma membrane"/>
    <property type="evidence" value="ECO:0007669"/>
    <property type="project" value="UniProtKB-SubCell"/>
</dbReference>
<dbReference type="InterPro" id="IPR000612">
    <property type="entry name" value="PMP3"/>
</dbReference>
<dbReference type="PANTHER" id="PTHR21659">
    <property type="entry name" value="HYDROPHOBIC PROTEIN RCI2 LOW TEMPERATURE AND SALT RESPONSIVE PROTEIN LTI6 -RELATED"/>
    <property type="match status" value="1"/>
</dbReference>
<dbReference type="PANTHER" id="PTHR21659:SF116">
    <property type="entry name" value="PLASMA MEMBRANE PROTEOLIPID 3"/>
    <property type="match status" value="1"/>
</dbReference>
<dbReference type="Pfam" id="PF01679">
    <property type="entry name" value="Pmp3"/>
    <property type="match status" value="1"/>
</dbReference>
<dbReference type="PROSITE" id="PS01309">
    <property type="entry name" value="UPF0057"/>
    <property type="match status" value="1"/>
</dbReference>
<evidence type="ECO:0000250" key="1"/>
<evidence type="ECO:0000255" key="2"/>
<evidence type="ECO:0000305" key="3"/>
<name>PMP3_NEUCR</name>
<proteinExistence type="inferred from homology"/>
<keyword id="KW-1003">Cell membrane</keyword>
<keyword id="KW-0472">Membrane</keyword>
<keyword id="KW-1185">Reference proteome</keyword>
<keyword id="KW-0812">Transmembrane</keyword>
<keyword id="KW-1133">Transmembrane helix</keyword>
<reference key="1">
    <citation type="journal article" date="2003" name="Nucleic Acids Res.">
        <title>What's in the genome of a filamentous fungus? Analysis of the Neurospora genome sequence.</title>
        <authorList>
            <person name="Mannhaupt G."/>
            <person name="Montrone C."/>
            <person name="Haase D."/>
            <person name="Mewes H.-W."/>
            <person name="Aign V."/>
            <person name="Hoheisel J.D."/>
            <person name="Fartmann B."/>
            <person name="Nyakatura G."/>
            <person name="Kempken F."/>
            <person name="Maier J."/>
            <person name="Schulte U."/>
        </authorList>
    </citation>
    <scope>NUCLEOTIDE SEQUENCE [LARGE SCALE GENOMIC DNA]</scope>
    <source>
        <strain>ATCC 24698 / 74-OR23-1A / CBS 708.71 / DSM 1257 / FGSC 987</strain>
    </source>
</reference>
<reference key="2">
    <citation type="journal article" date="2003" name="Nature">
        <title>The genome sequence of the filamentous fungus Neurospora crassa.</title>
        <authorList>
            <person name="Galagan J.E."/>
            <person name="Calvo S.E."/>
            <person name="Borkovich K.A."/>
            <person name="Selker E.U."/>
            <person name="Read N.D."/>
            <person name="Jaffe D.B."/>
            <person name="FitzHugh W."/>
            <person name="Ma L.-J."/>
            <person name="Smirnov S."/>
            <person name="Purcell S."/>
            <person name="Rehman B."/>
            <person name="Elkins T."/>
            <person name="Engels R."/>
            <person name="Wang S."/>
            <person name="Nielsen C.B."/>
            <person name="Butler J."/>
            <person name="Endrizzi M."/>
            <person name="Qui D."/>
            <person name="Ianakiev P."/>
            <person name="Bell-Pedersen D."/>
            <person name="Nelson M.A."/>
            <person name="Werner-Washburne M."/>
            <person name="Selitrennikoff C.P."/>
            <person name="Kinsey J.A."/>
            <person name="Braun E.L."/>
            <person name="Zelter A."/>
            <person name="Schulte U."/>
            <person name="Kothe G.O."/>
            <person name="Jedd G."/>
            <person name="Mewes H.-W."/>
            <person name="Staben C."/>
            <person name="Marcotte E."/>
            <person name="Greenberg D."/>
            <person name="Roy A."/>
            <person name="Foley K."/>
            <person name="Naylor J."/>
            <person name="Stange-Thomann N."/>
            <person name="Barrett R."/>
            <person name="Gnerre S."/>
            <person name="Kamal M."/>
            <person name="Kamvysselis M."/>
            <person name="Mauceli E.W."/>
            <person name="Bielke C."/>
            <person name="Rudd S."/>
            <person name="Frishman D."/>
            <person name="Krystofova S."/>
            <person name="Rasmussen C."/>
            <person name="Metzenberg R.L."/>
            <person name="Perkins D.D."/>
            <person name="Kroken S."/>
            <person name="Cogoni C."/>
            <person name="Macino G."/>
            <person name="Catcheside D.E.A."/>
            <person name="Li W."/>
            <person name="Pratt R.J."/>
            <person name="Osmani S.A."/>
            <person name="DeSouza C.P.C."/>
            <person name="Glass N.L."/>
            <person name="Orbach M.J."/>
            <person name="Berglund J.A."/>
            <person name="Voelker R."/>
            <person name="Yarden O."/>
            <person name="Plamann M."/>
            <person name="Seiler S."/>
            <person name="Dunlap J.C."/>
            <person name="Radford A."/>
            <person name="Aramayo R."/>
            <person name="Natvig D.O."/>
            <person name="Alex L.A."/>
            <person name="Mannhaupt G."/>
            <person name="Ebbole D.J."/>
            <person name="Freitag M."/>
            <person name="Paulsen I."/>
            <person name="Sachs M.S."/>
            <person name="Lander E.S."/>
            <person name="Nusbaum C."/>
            <person name="Birren B.W."/>
        </authorList>
    </citation>
    <scope>NUCLEOTIDE SEQUENCE [LARGE SCALE GENOMIC DNA]</scope>
    <source>
        <strain>ATCC 24698 / 74-OR23-1A / CBS 708.71 / DSM 1257 / FGSC 987</strain>
    </source>
</reference>
<gene>
    <name type="primary">pmp-1</name>
    <name type="synonym">pmp3</name>
    <name type="ORF">100H1.040</name>
    <name type="ORF">NCU06660</name>
</gene>
<organism>
    <name type="scientific">Neurospora crassa (strain ATCC 24698 / 74-OR23-1A / CBS 708.71 / DSM 1257 / FGSC 987)</name>
    <dbReference type="NCBI Taxonomy" id="367110"/>
    <lineage>
        <taxon>Eukaryota</taxon>
        <taxon>Fungi</taxon>
        <taxon>Dikarya</taxon>
        <taxon>Ascomycota</taxon>
        <taxon>Pezizomycotina</taxon>
        <taxon>Sordariomycetes</taxon>
        <taxon>Sordariomycetidae</taxon>
        <taxon>Sordariales</taxon>
        <taxon>Sordariaceae</taxon>
        <taxon>Neurospora</taxon>
    </lineage>
</organism>
<comment type="function">
    <text evidence="1">Plays a role in the regulation of membrane potential. Could mediate a proton leak (By similarity).</text>
</comment>
<comment type="subcellular location">
    <subcellularLocation>
        <location evidence="3">Cell membrane</location>
        <topology evidence="3">Single-pass membrane protein</topology>
    </subcellularLocation>
</comment>
<comment type="similarity">
    <text evidence="3">Belongs to the UPF0057 (PMP3) family.</text>
</comment>
<comment type="sequence caution" evidence="3">
    <conflict type="erroneous gene model prediction">
        <sequence resource="EMBL-CDS" id="EAA31469"/>
    </conflict>
</comment>
<feature type="chain" id="PRO_0000247913" description="Plasma membrane proteolipid 3">
    <location>
        <begin position="1"/>
        <end position="57"/>
    </location>
</feature>
<feature type="transmembrane region" description="Helical" evidence="2">
    <location>
        <begin position="34"/>
        <end position="54"/>
    </location>
</feature>